<protein>
    <recommendedName>
        <fullName evidence="1">Tryptophan synthase beta chain</fullName>
        <ecNumber evidence="1">4.2.1.20</ecNumber>
    </recommendedName>
</protein>
<gene>
    <name evidence="1" type="primary">trpB</name>
    <name type="ordered locus">MW1259</name>
</gene>
<dbReference type="EC" id="4.2.1.20" evidence="1"/>
<dbReference type="EMBL" id="BA000033">
    <property type="protein sequence ID" value="BAB95124.1"/>
    <property type="molecule type" value="Genomic_DNA"/>
</dbReference>
<dbReference type="RefSeq" id="WP_001041337.1">
    <property type="nucleotide sequence ID" value="NC_003923.1"/>
</dbReference>
<dbReference type="SMR" id="Q8NWU2"/>
<dbReference type="KEGG" id="sam:MW1259"/>
<dbReference type="HOGENOM" id="CLU_016734_3_1_9"/>
<dbReference type="UniPathway" id="UPA00035">
    <property type="reaction ID" value="UER00044"/>
</dbReference>
<dbReference type="GO" id="GO:0005737">
    <property type="term" value="C:cytoplasm"/>
    <property type="evidence" value="ECO:0007669"/>
    <property type="project" value="TreeGrafter"/>
</dbReference>
<dbReference type="GO" id="GO:0004834">
    <property type="term" value="F:tryptophan synthase activity"/>
    <property type="evidence" value="ECO:0007669"/>
    <property type="project" value="UniProtKB-UniRule"/>
</dbReference>
<dbReference type="CDD" id="cd06446">
    <property type="entry name" value="Trp-synth_B"/>
    <property type="match status" value="1"/>
</dbReference>
<dbReference type="FunFam" id="3.40.50.1100:FF:000001">
    <property type="entry name" value="Tryptophan synthase beta chain"/>
    <property type="match status" value="1"/>
</dbReference>
<dbReference type="FunFam" id="3.40.50.1100:FF:000004">
    <property type="entry name" value="Tryptophan synthase beta chain"/>
    <property type="match status" value="1"/>
</dbReference>
<dbReference type="Gene3D" id="3.40.50.1100">
    <property type="match status" value="2"/>
</dbReference>
<dbReference type="HAMAP" id="MF_00133">
    <property type="entry name" value="Trp_synth_beta"/>
    <property type="match status" value="1"/>
</dbReference>
<dbReference type="InterPro" id="IPR006653">
    <property type="entry name" value="Trp_synth_b_CS"/>
</dbReference>
<dbReference type="InterPro" id="IPR006654">
    <property type="entry name" value="Trp_synth_beta"/>
</dbReference>
<dbReference type="InterPro" id="IPR023026">
    <property type="entry name" value="Trp_synth_beta/beta-like"/>
</dbReference>
<dbReference type="InterPro" id="IPR001926">
    <property type="entry name" value="TrpB-like_PALP"/>
</dbReference>
<dbReference type="InterPro" id="IPR036052">
    <property type="entry name" value="TrpB-like_PALP_sf"/>
</dbReference>
<dbReference type="NCBIfam" id="TIGR00263">
    <property type="entry name" value="trpB"/>
    <property type="match status" value="1"/>
</dbReference>
<dbReference type="PANTHER" id="PTHR48077:SF3">
    <property type="entry name" value="TRYPTOPHAN SYNTHASE"/>
    <property type="match status" value="1"/>
</dbReference>
<dbReference type="PANTHER" id="PTHR48077">
    <property type="entry name" value="TRYPTOPHAN SYNTHASE-RELATED"/>
    <property type="match status" value="1"/>
</dbReference>
<dbReference type="Pfam" id="PF00291">
    <property type="entry name" value="PALP"/>
    <property type="match status" value="1"/>
</dbReference>
<dbReference type="PIRSF" id="PIRSF001413">
    <property type="entry name" value="Trp_syn_beta"/>
    <property type="match status" value="1"/>
</dbReference>
<dbReference type="SUPFAM" id="SSF53686">
    <property type="entry name" value="Tryptophan synthase beta subunit-like PLP-dependent enzymes"/>
    <property type="match status" value="1"/>
</dbReference>
<dbReference type="PROSITE" id="PS00168">
    <property type="entry name" value="TRP_SYNTHASE_BETA"/>
    <property type="match status" value="1"/>
</dbReference>
<name>TRPB_STAAW</name>
<reference key="1">
    <citation type="journal article" date="2002" name="Lancet">
        <title>Genome and virulence determinants of high virulence community-acquired MRSA.</title>
        <authorList>
            <person name="Baba T."/>
            <person name="Takeuchi F."/>
            <person name="Kuroda M."/>
            <person name="Yuzawa H."/>
            <person name="Aoki K."/>
            <person name="Oguchi A."/>
            <person name="Nagai Y."/>
            <person name="Iwama N."/>
            <person name="Asano K."/>
            <person name="Naimi T."/>
            <person name="Kuroda H."/>
            <person name="Cui L."/>
            <person name="Yamamoto K."/>
            <person name="Hiramatsu K."/>
        </authorList>
    </citation>
    <scope>NUCLEOTIDE SEQUENCE [LARGE SCALE GENOMIC DNA]</scope>
    <source>
        <strain>MW2</strain>
    </source>
</reference>
<feature type="chain" id="PRO_0000099002" description="Tryptophan synthase beta chain">
    <location>
        <begin position="1"/>
        <end position="404"/>
    </location>
</feature>
<feature type="modified residue" description="N6-(pyridoxal phosphate)lysine" evidence="1">
    <location>
        <position position="94"/>
    </location>
</feature>
<organism>
    <name type="scientific">Staphylococcus aureus (strain MW2)</name>
    <dbReference type="NCBI Taxonomy" id="196620"/>
    <lineage>
        <taxon>Bacteria</taxon>
        <taxon>Bacillati</taxon>
        <taxon>Bacillota</taxon>
        <taxon>Bacilli</taxon>
        <taxon>Bacillales</taxon>
        <taxon>Staphylococcaceae</taxon>
        <taxon>Staphylococcus</taxon>
    </lineage>
</organism>
<comment type="function">
    <text evidence="1">The beta subunit is responsible for the synthesis of L-tryptophan from indole and L-serine.</text>
</comment>
<comment type="catalytic activity">
    <reaction evidence="1">
        <text>(1S,2R)-1-C-(indol-3-yl)glycerol 3-phosphate + L-serine = D-glyceraldehyde 3-phosphate + L-tryptophan + H2O</text>
        <dbReference type="Rhea" id="RHEA:10532"/>
        <dbReference type="ChEBI" id="CHEBI:15377"/>
        <dbReference type="ChEBI" id="CHEBI:33384"/>
        <dbReference type="ChEBI" id="CHEBI:57912"/>
        <dbReference type="ChEBI" id="CHEBI:58866"/>
        <dbReference type="ChEBI" id="CHEBI:59776"/>
        <dbReference type="EC" id="4.2.1.20"/>
    </reaction>
</comment>
<comment type="cofactor">
    <cofactor evidence="1">
        <name>pyridoxal 5'-phosphate</name>
        <dbReference type="ChEBI" id="CHEBI:597326"/>
    </cofactor>
</comment>
<comment type="pathway">
    <text evidence="1">Amino-acid biosynthesis; L-tryptophan biosynthesis; L-tryptophan from chorismate: step 5/5.</text>
</comment>
<comment type="subunit">
    <text evidence="1">Tetramer of two alpha and two beta chains.</text>
</comment>
<comment type="similarity">
    <text evidence="1">Belongs to the TrpB family.</text>
</comment>
<sequence length="404" mass="43965">MNKQIQTEADELGFFGEYGGQYVPETLMPAIIELKKAYKEAKADPEFQRELEYYLSEYVGRATPLTYAASYTESLGGAKIYLKREDLNHTGAHKINNALGQALLAKRMGKKKLVAETGAGQHGVASATVAALFDMELVVFMGSEDIKRQQLNVFRMELLGAKVVAVEDGQGTLSDAVNKALQYWVSHVDDTHYLLGSALGPDPFPTIVRDFQSVIGKEIKSQILKKEGRLPDAIVACIGGGSNAIGTFYPFIKDDVALYGVEAAGQGDDTDKHALAIGKGSPGVLHGTKMYLIQDEDGQVQLAHSISAGLDYPGIGPEHSYYHDIGRVTFENASDTQAMNALINFTKHEGIIPAIESAHALSYVERLAPTMSKEDIIVVTISGRGDKDMETIRQYMVERGLAND</sequence>
<accession>Q8NWU2</accession>
<evidence type="ECO:0000255" key="1">
    <source>
        <dbReference type="HAMAP-Rule" id="MF_00133"/>
    </source>
</evidence>
<keyword id="KW-0028">Amino-acid biosynthesis</keyword>
<keyword id="KW-0057">Aromatic amino acid biosynthesis</keyword>
<keyword id="KW-0456">Lyase</keyword>
<keyword id="KW-0663">Pyridoxal phosphate</keyword>
<keyword id="KW-0822">Tryptophan biosynthesis</keyword>
<proteinExistence type="inferred from homology"/>